<reference key="1">
    <citation type="journal article" date="2004" name="Nat. Genet.">
        <title>Evidence in the Legionella pneumophila genome for exploitation of host cell functions and high genome plasticity.</title>
        <authorList>
            <person name="Cazalet C."/>
            <person name="Rusniok C."/>
            <person name="Brueggemann H."/>
            <person name="Zidane N."/>
            <person name="Magnier A."/>
            <person name="Ma L."/>
            <person name="Tichit M."/>
            <person name="Jarraud S."/>
            <person name="Bouchier C."/>
            <person name="Vandenesch F."/>
            <person name="Kunst F."/>
            <person name="Etienne J."/>
            <person name="Glaser P."/>
            <person name="Buchrieser C."/>
        </authorList>
    </citation>
    <scope>NUCLEOTIDE SEQUENCE [LARGE SCALE GENOMIC DNA]</scope>
    <source>
        <strain>Paris</strain>
    </source>
</reference>
<feature type="chain" id="PRO_1000206135" description="Thiazole synthase">
    <location>
        <begin position="1"/>
        <end position="262"/>
    </location>
</feature>
<feature type="active site" description="Schiff-base intermediate with DXP" evidence="1">
    <location>
        <position position="96"/>
    </location>
</feature>
<feature type="binding site" evidence="1">
    <location>
        <position position="157"/>
    </location>
    <ligand>
        <name>1-deoxy-D-xylulose 5-phosphate</name>
        <dbReference type="ChEBI" id="CHEBI:57792"/>
    </ligand>
</feature>
<feature type="binding site" evidence="1">
    <location>
        <begin position="184"/>
        <end position="185"/>
    </location>
    <ligand>
        <name>1-deoxy-D-xylulose 5-phosphate</name>
        <dbReference type="ChEBI" id="CHEBI:57792"/>
    </ligand>
</feature>
<feature type="binding site" evidence="1">
    <location>
        <begin position="206"/>
        <end position="207"/>
    </location>
    <ligand>
        <name>1-deoxy-D-xylulose 5-phosphate</name>
        <dbReference type="ChEBI" id="CHEBI:57792"/>
    </ligand>
</feature>
<sequence length="262" mass="28773">MWNLAGKELSSRLLLGTACYPSLEHMQQAILNSGTEVITISIKRQTSAGLDGESFWQAVKKLDCHFLPNTAGCRNAEAAINTAEIARELFDTHWIKLEVIGDDYNLQPEPFELIKATRILIDRGFEVFPYCTDDLVLCQKLVDAGCKILMPWGAPIGSGKGLINPYALETLRYRFPDITLIIDAGIGKPSHAVQAMEFGFDGVLLNTAVALANHPALMATAFRHAVIAGHQAFTGGMMSERNVAHPSTPLIDTPFWHQVNNL</sequence>
<name>THIG_LEGPA</name>
<keyword id="KW-0963">Cytoplasm</keyword>
<keyword id="KW-0704">Schiff base</keyword>
<keyword id="KW-0784">Thiamine biosynthesis</keyword>
<keyword id="KW-0808">Transferase</keyword>
<comment type="function">
    <text evidence="1">Catalyzes the rearrangement of 1-deoxy-D-xylulose 5-phosphate (DXP) to produce the thiazole phosphate moiety of thiamine. Sulfur is provided by the thiocarboxylate moiety of the carrier protein ThiS. In vitro, sulfur can be provided by H(2)S.</text>
</comment>
<comment type="catalytic activity">
    <reaction evidence="1">
        <text>[ThiS sulfur-carrier protein]-C-terminal-Gly-aminoethanethioate + 2-iminoacetate + 1-deoxy-D-xylulose 5-phosphate = [ThiS sulfur-carrier protein]-C-terminal Gly-Gly + 2-[(2R,5Z)-2-carboxy-4-methylthiazol-5(2H)-ylidene]ethyl phosphate + 2 H2O + H(+)</text>
        <dbReference type="Rhea" id="RHEA:26297"/>
        <dbReference type="Rhea" id="RHEA-COMP:12909"/>
        <dbReference type="Rhea" id="RHEA-COMP:19908"/>
        <dbReference type="ChEBI" id="CHEBI:15377"/>
        <dbReference type="ChEBI" id="CHEBI:15378"/>
        <dbReference type="ChEBI" id="CHEBI:57792"/>
        <dbReference type="ChEBI" id="CHEBI:62899"/>
        <dbReference type="ChEBI" id="CHEBI:77846"/>
        <dbReference type="ChEBI" id="CHEBI:90778"/>
        <dbReference type="ChEBI" id="CHEBI:232372"/>
        <dbReference type="EC" id="2.8.1.10"/>
    </reaction>
</comment>
<comment type="pathway">
    <text evidence="1">Cofactor biosynthesis; thiamine diphosphate biosynthesis.</text>
</comment>
<comment type="subunit">
    <text evidence="1">Homotetramer. Forms heterodimers with either ThiH or ThiS.</text>
</comment>
<comment type="subcellular location">
    <subcellularLocation>
        <location evidence="1">Cytoplasm</location>
    </subcellularLocation>
</comment>
<comment type="similarity">
    <text evidence="1">Belongs to the ThiG family.</text>
</comment>
<organism>
    <name type="scientific">Legionella pneumophila (strain Paris)</name>
    <dbReference type="NCBI Taxonomy" id="297246"/>
    <lineage>
        <taxon>Bacteria</taxon>
        <taxon>Pseudomonadati</taxon>
        <taxon>Pseudomonadota</taxon>
        <taxon>Gammaproteobacteria</taxon>
        <taxon>Legionellales</taxon>
        <taxon>Legionellaceae</taxon>
        <taxon>Legionella</taxon>
    </lineage>
</organism>
<gene>
    <name evidence="1" type="primary">thiG</name>
    <name type="ordered locus">lpp1525</name>
</gene>
<proteinExistence type="inferred from homology"/>
<accession>Q5X4Z5</accession>
<dbReference type="EC" id="2.8.1.10" evidence="1"/>
<dbReference type="EMBL" id="CR628336">
    <property type="protein sequence ID" value="CAH12676.1"/>
    <property type="molecule type" value="Genomic_DNA"/>
</dbReference>
<dbReference type="RefSeq" id="WP_011213847.1">
    <property type="nucleotide sequence ID" value="NC_006368.1"/>
</dbReference>
<dbReference type="SMR" id="Q5X4Z5"/>
<dbReference type="KEGG" id="lpp:lpp1525"/>
<dbReference type="LegioList" id="lpp1525"/>
<dbReference type="HOGENOM" id="CLU_062233_1_0_6"/>
<dbReference type="UniPathway" id="UPA00060"/>
<dbReference type="GO" id="GO:0005737">
    <property type="term" value="C:cytoplasm"/>
    <property type="evidence" value="ECO:0007669"/>
    <property type="project" value="UniProtKB-SubCell"/>
</dbReference>
<dbReference type="GO" id="GO:1990107">
    <property type="term" value="F:thiazole synthase activity"/>
    <property type="evidence" value="ECO:0007669"/>
    <property type="project" value="UniProtKB-EC"/>
</dbReference>
<dbReference type="GO" id="GO:0009229">
    <property type="term" value="P:thiamine diphosphate biosynthetic process"/>
    <property type="evidence" value="ECO:0007669"/>
    <property type="project" value="UniProtKB-UniRule"/>
</dbReference>
<dbReference type="CDD" id="cd04728">
    <property type="entry name" value="ThiG"/>
    <property type="match status" value="1"/>
</dbReference>
<dbReference type="Gene3D" id="3.20.20.70">
    <property type="entry name" value="Aldolase class I"/>
    <property type="match status" value="1"/>
</dbReference>
<dbReference type="HAMAP" id="MF_00443">
    <property type="entry name" value="ThiG"/>
    <property type="match status" value="1"/>
</dbReference>
<dbReference type="InterPro" id="IPR013785">
    <property type="entry name" value="Aldolase_TIM"/>
</dbReference>
<dbReference type="InterPro" id="IPR033983">
    <property type="entry name" value="Thiazole_synthase_ThiG"/>
</dbReference>
<dbReference type="InterPro" id="IPR008867">
    <property type="entry name" value="ThiG"/>
</dbReference>
<dbReference type="PANTHER" id="PTHR34266">
    <property type="entry name" value="THIAZOLE SYNTHASE"/>
    <property type="match status" value="1"/>
</dbReference>
<dbReference type="PANTHER" id="PTHR34266:SF2">
    <property type="entry name" value="THIAZOLE SYNTHASE"/>
    <property type="match status" value="1"/>
</dbReference>
<dbReference type="Pfam" id="PF05690">
    <property type="entry name" value="ThiG"/>
    <property type="match status" value="1"/>
</dbReference>
<dbReference type="SUPFAM" id="SSF110399">
    <property type="entry name" value="ThiG-like"/>
    <property type="match status" value="1"/>
</dbReference>
<protein>
    <recommendedName>
        <fullName evidence="1">Thiazole synthase</fullName>
        <ecNumber evidence="1">2.8.1.10</ecNumber>
    </recommendedName>
</protein>
<evidence type="ECO:0000255" key="1">
    <source>
        <dbReference type="HAMAP-Rule" id="MF_00443"/>
    </source>
</evidence>